<organism>
    <name type="scientific">Plasmodium berghei (strain Anka)</name>
    <dbReference type="NCBI Taxonomy" id="5823"/>
    <lineage>
        <taxon>Eukaryota</taxon>
        <taxon>Sar</taxon>
        <taxon>Alveolata</taxon>
        <taxon>Apicomplexa</taxon>
        <taxon>Aconoidasida</taxon>
        <taxon>Haemosporida</taxon>
        <taxon>Plasmodiidae</taxon>
        <taxon>Plasmodium</taxon>
        <taxon>Plasmodium (Vinckeia)</taxon>
    </lineage>
</organism>
<comment type="function">
    <text evidence="7 8 9 10 12">Essential sporozoite protein (PubMed:15630135, PubMed:16207248, PubMed:18005753, PubMed:21262960, PubMed:6985745). In the mosquito vector, required for sporozoite development in the oocyst, migration through the vector hemolymph and entry into the vector salivary glands (PubMed:16207248, PubMed:21262960). In the vertebrate host, required for sporozoite migration through the host dermis and infection of host hepatocytes (PubMed:15630135, PubMed:18005753, PubMed:21262960, PubMed:6985745). Binds to highly sulfated heparan sulfate proteoglycans (HSPGs) on the surface of host hepatocytes (PubMed:18005753).</text>
</comment>
<comment type="function">
    <molecule>Circumsporozoite protein C-terminus</molecule>
    <text evidence="9 10">In the vertebrate host, binds to highly sulfated heparan sulfate proteoglycans (HSPGs) on the surface of host hepatocytes and is required for sporozoite invasion of the host hepatocytes.</text>
</comment>
<comment type="subcellular location">
    <subcellularLocation>
        <location evidence="7 8 10 12">Cell membrane</location>
        <topology evidence="16">Lipid-anchor</topology>
        <topology evidence="16">GPI-anchor</topology>
    </subcellularLocation>
    <subcellularLocation>
        <location evidence="8">Cytoplasm</location>
    </subcellularLocation>
    <text evidence="8">Localizes to the cytoplasm and the cell membrane in oocysts at day 6 post infection and then gradually distributes over the entire cell surface of the sporoblast and the budding sporozoites.</text>
</comment>
<comment type="developmental stage">
    <text evidence="7 8 9 10 12">Expressed in sporozoites (at protein level) (PubMed:15630135, PubMed:16207248, PubMed:18005753, PubMed:21262960, PubMed:6985745). In the mosquito vector, expression begins in the oocyst 8 days post-infection (at protein level) (PubMed:16207248).</text>
</comment>
<comment type="domain">
    <text evidence="3 10">The N-terminus is involved in the initial binding to heparan sulfate proteoglycans (HSPGs) on the surface of host hepatocytes (By similarity). The N-terminus masks the TSP type-1 (TSR) domain which maintains the sporozoites in a migratory state, enabling them to complete their journey to the salivary gland in the mosquito vector and then to the host liver (PubMed:21262960). The unmasking of the TSP type-1 (TSR) domain when the sporozoite interacts with the host hepatocyte also protects sporozoites from host antibodies (PubMed:21262960).</text>
</comment>
<comment type="domain">
    <text evidence="10">The TSP type-1 (TSR) domain is required for sporozoite development and invasion (PubMed:21262960). CSP has two conformational states, an adhesive conformation in which the TSP type-1 (TSR) domain is exposed and a nonadhesive conformation in which the TSR is masked by the N-terminus (PubMed:21262960). TSR-exposed conformation occurs during sporozoite development in the oocyst in the mosquito vector and during host hepatocyte invasion (PubMed:21262960). TSR-masked conformation occurs during sporozoite migration through the hemolymph to salivary glands in the mosquito vector and in the host dermis (PubMed:21262960).</text>
</comment>
<comment type="domain">
    <text evidence="8">The GPI-anchor is essential for cell membrane localization and for sporozoite formation inside the oocyst.</text>
</comment>
<comment type="PTM">
    <text evidence="7 9 10">During host cell invasion, proteolytically cleaved at the cell membrane in the region I by a papain-like cysteine protease of parasite origin (PubMed:15630135, PubMed:18005753, PubMed:21262960). Cleavage is triggered by the sporozoite contact with highly sulfated heparan sulfate proteoglycans (HSPGs) present on the host hepatocyte cell surface (PubMed:18005753). Cleavage exposes the TSP type-1 (TSR) domain and is required for productive invasion of host hepatocytes but not for adhesion to the host cell membrane (PubMed:15630135, PubMed:18005753, PubMed:21262960). Cleavage is dispensable for sporozoite development in the oocyst, motility and for traversal of host and vector cells (PubMed:21262960).</text>
</comment>
<comment type="PTM">
    <text evidence="2">O-glycosylated; maybe by POFUT2.</text>
</comment>
<comment type="polymorphism">
    <text evidence="11">The sequence of the repeats varies across Plasmodium species and strains.</text>
</comment>
<comment type="biotechnology">
    <text evidence="11 12">Antibodies against the central repeats (repeats 1), such as 3D11, can neutralize infection in the mouse host and thus may be a candidate for the design of vaccine against Plasmodium species that infect human.</text>
</comment>
<comment type="similarity">
    <text evidence="15">Belongs to the plasmodium circumsporozoite protein family.</text>
</comment>
<dbReference type="EMBL" id="X17606">
    <property type="protein sequence ID" value="CAA35608.1"/>
    <property type="molecule type" value="Genomic_DNA"/>
</dbReference>
<dbReference type="EMBL" id="LK023119">
    <property type="protein sequence ID" value="VUC54256.1"/>
    <property type="molecule type" value="Genomic_DNA"/>
</dbReference>
<dbReference type="PIR" id="S07873">
    <property type="entry name" value="OZZQBK"/>
</dbReference>
<dbReference type="PDB" id="6X8P">
    <property type="method" value="X-ray"/>
    <property type="resolution" value="2.27 A"/>
    <property type="chains" value="P=117-132"/>
</dbReference>
<dbReference type="PDB" id="6X8Q">
    <property type="method" value="X-ray"/>
    <property type="resolution" value="1.60 A"/>
    <property type="chains" value="P=157-172"/>
</dbReference>
<dbReference type="PDB" id="6X8S">
    <property type="method" value="X-ray"/>
    <property type="resolution" value="1.55 A"/>
    <property type="chains" value="P=133-148"/>
</dbReference>
<dbReference type="PDB" id="6X8U">
    <property type="method" value="X-ray"/>
    <property type="resolution" value="1.55 A"/>
    <property type="chains" value="P=181-196"/>
</dbReference>
<dbReference type="PDBsum" id="6X8P"/>
<dbReference type="PDBsum" id="6X8Q"/>
<dbReference type="PDBsum" id="6X8S"/>
<dbReference type="PDBsum" id="6X8U"/>
<dbReference type="SMR" id="P23093"/>
<dbReference type="STRING" id="5823.A0A509AF96"/>
<dbReference type="GlyCosmos" id="P23093">
    <property type="glycosylation" value="1 site, No reported glycans"/>
</dbReference>
<dbReference type="VEuPathDB" id="PlasmoDB:PBANKA_0403200"/>
<dbReference type="eggNOG" id="ENOG502RVPU">
    <property type="taxonomic scope" value="Eukaryota"/>
</dbReference>
<dbReference type="OMA" id="GTDPKPG"/>
<dbReference type="Proteomes" id="UP000074855">
    <property type="component" value="Chromosome 4"/>
</dbReference>
<dbReference type="GO" id="GO:0005737">
    <property type="term" value="C:cytoplasm"/>
    <property type="evidence" value="ECO:0007669"/>
    <property type="project" value="UniProtKB-SubCell"/>
</dbReference>
<dbReference type="GO" id="GO:0009897">
    <property type="term" value="C:external side of plasma membrane"/>
    <property type="evidence" value="ECO:0000314"/>
    <property type="project" value="UniProtKB"/>
</dbReference>
<dbReference type="GO" id="GO:0044650">
    <property type="term" value="P:adhesion of symbiont to host cell"/>
    <property type="evidence" value="ECO:0000315"/>
    <property type="project" value="UniProtKB"/>
</dbReference>
<dbReference type="GO" id="GO:0085017">
    <property type="term" value="P:entry into host cell by a symbiont-containing vacuole"/>
    <property type="evidence" value="ECO:0000315"/>
    <property type="project" value="UniProtKB"/>
</dbReference>
<dbReference type="GO" id="GO:0075294">
    <property type="term" value="P:positive regulation by symbiont of entry into host"/>
    <property type="evidence" value="ECO:0000314"/>
    <property type="project" value="UniProtKB"/>
</dbReference>
<dbReference type="GO" id="GO:0044129">
    <property type="term" value="P:positive regulation of development of symbiont in host"/>
    <property type="evidence" value="ECO:0000315"/>
    <property type="project" value="UniProtKB"/>
</dbReference>
<dbReference type="GO" id="GO:0051094">
    <property type="term" value="P:positive regulation of developmental process"/>
    <property type="evidence" value="ECO:0000315"/>
    <property type="project" value="UniProtKB"/>
</dbReference>
<dbReference type="Gene3D" id="2.20.100.10">
    <property type="entry name" value="Thrombospondin type-1 (TSP1) repeat"/>
    <property type="match status" value="1"/>
</dbReference>
<dbReference type="InterPro" id="IPR003067">
    <property type="entry name" value="Crcmsprzoite"/>
</dbReference>
<dbReference type="InterPro" id="IPR000884">
    <property type="entry name" value="TSP1_rpt"/>
</dbReference>
<dbReference type="InterPro" id="IPR036383">
    <property type="entry name" value="TSP1_rpt_sf"/>
</dbReference>
<dbReference type="Pfam" id="PF00090">
    <property type="entry name" value="TSP_1"/>
    <property type="match status" value="1"/>
</dbReference>
<dbReference type="PRINTS" id="PR01303">
    <property type="entry name" value="CRCMSPRZOITE"/>
</dbReference>
<dbReference type="SMART" id="SM00209">
    <property type="entry name" value="TSP1"/>
    <property type="match status" value="1"/>
</dbReference>
<dbReference type="SUPFAM" id="SSF82895">
    <property type="entry name" value="TSP-1 type 1 repeat"/>
    <property type="match status" value="1"/>
</dbReference>
<dbReference type="PROSITE" id="PS50092">
    <property type="entry name" value="TSP1"/>
    <property type="match status" value="1"/>
</dbReference>
<reference evidence="19" key="1">
    <citation type="journal article" date="1990" name="Nucleic Acids Res.">
        <title>Nucleotide sequence of the Plasmodium berghei circumsporozoite protein gene from the ANKA clone 2.34L.</title>
        <authorList>
            <person name="Lockyer M.J."/>
            <person name="Davies C.S."/>
            <person name="Suhrbier A."/>
            <person name="Sinden R.E."/>
        </authorList>
    </citation>
    <scope>NUCLEOTIDE SEQUENCE [GENOMIC DNA]</scope>
    <scope>REPEATS</scope>
    <source>
        <strain evidence="19">ANKA clone 2.34L</strain>
    </source>
</reference>
<reference evidence="20" key="2">
    <citation type="journal article" date="2014" name="BMC Biol.">
        <title>A comprehensive evaluation of rodent malaria parasite genomes and gene expression.</title>
        <authorList>
            <person name="Otto T.D."/>
            <person name="Bohme U."/>
            <person name="Jackson A.P."/>
            <person name="Hunt M."/>
            <person name="Franke-Fayard B."/>
            <person name="Hoeijmakers W.A."/>
            <person name="Religa A.A."/>
            <person name="Robertson L."/>
            <person name="Sanders M."/>
            <person name="Ogun S.A."/>
            <person name="Cunningham D."/>
            <person name="Erhart A."/>
            <person name="Billker O."/>
            <person name="Khan S.M."/>
            <person name="Stunnenberg H.G."/>
            <person name="Langhorne J."/>
            <person name="Holder A.A."/>
            <person name="Waters A.P."/>
            <person name="Newbold C.I."/>
            <person name="Pain A."/>
            <person name="Berriman M."/>
            <person name="Janse C.J."/>
        </authorList>
    </citation>
    <scope>NUCLEOTIDE SEQUENCE [LARGE SCALE GENOMIC DNA]</scope>
    <source>
        <strain evidence="20">ANKA</strain>
    </source>
</reference>
<reference key="3">
    <citation type="journal article" date="1980" name="Science">
        <title>Hybridoma produces protective antibodies directed against the sporozoite stage of malaria parasite.</title>
        <authorList>
            <person name="Yoshida N."/>
            <person name="Nussenzweig R.S."/>
            <person name="Potocnjak P."/>
            <person name="Nussenzweig V."/>
            <person name="Aikawa M."/>
        </authorList>
    </citation>
    <scope>FUNCTION</scope>
    <scope>SUBCELLULAR LOCATION</scope>
    <scope>DEVELOPMENTAL STAGE</scope>
    <scope>BIOTECHNOLOGY</scope>
</reference>
<reference key="4">
    <citation type="journal article" date="2005" name="Cell. Microbiol.">
        <title>Mutational analysis of the GPI-anchor addition sequence from the circumsporozoite protein of Plasmodium.</title>
        <authorList>
            <person name="Wang Q."/>
            <person name="Fujioka H."/>
            <person name="Nussenzweig V."/>
        </authorList>
    </citation>
    <scope>FUNCTION</scope>
    <scope>SUBCELLULAR LOCATION</scope>
    <scope>DEVELOPMENTAL STAGE</scope>
    <scope>DOMAIN</scope>
    <scope>MUTAGENESIS OF 317-CYS--ASN-340</scope>
</reference>
<reference key="5">
    <citation type="journal article" date="2005" name="J. Exp. Med.">
        <title>The Plasmodium circumsporozoite protein is proteolytically processed during cell invasion.</title>
        <authorList>
            <person name="Coppi A."/>
            <person name="Pinzon-Ortiz C."/>
            <person name="Hutter C."/>
            <person name="Sinnis P."/>
        </authorList>
    </citation>
    <scope>FUNCTION</scope>
    <scope>SUBCELLULAR LOCATION</scope>
    <scope>DEVELOPMENTAL STAGE</scope>
    <scope>PROTEOLYTIC CLEAVAGE</scope>
</reference>
<reference key="6">
    <citation type="journal article" date="2007" name="Cell Host Microbe">
        <title>Heparan sulfate proteoglycans provide a signal to Plasmodium sporozoites to stop migrating and productively invade host cells.</title>
        <authorList>
            <person name="Coppi A."/>
            <person name="Tewari R."/>
            <person name="Bishop J.R."/>
            <person name="Bennett B.L."/>
            <person name="Lawrence R."/>
            <person name="Esko J.D."/>
            <person name="Billker O."/>
            <person name="Sinnis P."/>
        </authorList>
    </citation>
    <scope>FUNCTION</scope>
    <scope>DEVELOPMENTAL STAGE</scope>
    <scope>PROTEOLYTIC CLEAVAGE</scope>
</reference>
<reference key="7">
    <citation type="journal article" date="2011" name="J. Exp. Med.">
        <title>The malaria circumsporozoite protein has two functional domains, each with distinct roles as sporozoites journey from mosquito to mammalian host.</title>
        <authorList>
            <person name="Coppi A."/>
            <person name="Natarajan R."/>
            <person name="Pradel G."/>
            <person name="Bennett B.L."/>
            <person name="James E.R."/>
            <person name="Roggero M.A."/>
            <person name="Corradin G."/>
            <person name="Persson C."/>
            <person name="Tewari R."/>
            <person name="Sinnis P."/>
        </authorList>
    </citation>
    <scope>FUNCTION</scope>
    <scope>SUBCELLULAR LOCATION</scope>
    <scope>DEVELOPMENTAL STAGE</scope>
    <scope>DOMAIN</scope>
    <scope>PROTEOLYTIC CLEAVAGE</scope>
    <scope>MUTAGENESIS OF 25-ASN--PRO-93 AND 89-LYS--PRO-93</scope>
</reference>
<reference evidence="21 22 23 24" key="8">
    <citation type="journal article" date="2020" name="Elife">
        <title>Structural ordering of the Plasmodium berghei circumsporozoite protein repeats by inhibitory antibody 3D11.</title>
        <authorList>
            <person name="Kucharska I."/>
            <person name="Thai E."/>
            <person name="Srivastava A."/>
            <person name="Rubinstein J.L."/>
            <person name="Pomes R."/>
            <person name="Julien J.P."/>
        </authorList>
    </citation>
    <scope>X-RAY CRYSTALLOGRAPHY (1.55 ANGSTROMS) OF 181-196 IN COMPLEX WITH ANTIBODY 3D11</scope>
    <scope>REPEATS</scope>
    <scope>BIOTECHNOLOGY</scope>
    <scope>POLYMORPHISM</scope>
</reference>
<protein>
    <recommendedName>
        <fullName evidence="13">Circumsporozoite protein</fullName>
        <shortName evidence="1">CS</shortName>
        <shortName evidence="14">PbCSP</shortName>
    </recommendedName>
    <component>
        <recommendedName>
            <fullName evidence="15">Circumsporozoite protein C-terminus</fullName>
        </recommendedName>
    </component>
</protein>
<proteinExistence type="evidence at protein level"/>
<evidence type="ECO:0000250" key="1">
    <source>
        <dbReference type="UniProtKB" id="P06915"/>
    </source>
</evidence>
<evidence type="ECO:0000250" key="2">
    <source>
        <dbReference type="UniProtKB" id="P19597"/>
    </source>
</evidence>
<evidence type="ECO:0000250" key="3">
    <source>
        <dbReference type="UniProtKB" id="Q7K740"/>
    </source>
</evidence>
<evidence type="ECO:0000255" key="4"/>
<evidence type="ECO:0000255" key="5">
    <source>
        <dbReference type="PROSITE-ProRule" id="PRU00210"/>
    </source>
</evidence>
<evidence type="ECO:0000256" key="6">
    <source>
        <dbReference type="SAM" id="MobiDB-lite"/>
    </source>
</evidence>
<evidence type="ECO:0000269" key="7">
    <source>
    </source>
</evidence>
<evidence type="ECO:0000269" key="8">
    <source>
    </source>
</evidence>
<evidence type="ECO:0000269" key="9">
    <source>
    </source>
</evidence>
<evidence type="ECO:0000269" key="10">
    <source>
    </source>
</evidence>
<evidence type="ECO:0000269" key="11">
    <source>
    </source>
</evidence>
<evidence type="ECO:0000269" key="12">
    <source>
    </source>
</evidence>
<evidence type="ECO:0000303" key="13">
    <source>
    </source>
</evidence>
<evidence type="ECO:0000303" key="14">
    <source>
    </source>
</evidence>
<evidence type="ECO:0000305" key="15"/>
<evidence type="ECO:0000305" key="16">
    <source>
    </source>
</evidence>
<evidence type="ECO:0000305" key="17">
    <source>
    </source>
</evidence>
<evidence type="ECO:0000305" key="18">
    <source>
    </source>
</evidence>
<evidence type="ECO:0000312" key="19">
    <source>
        <dbReference type="EMBL" id="CAA35608.1"/>
    </source>
</evidence>
<evidence type="ECO:0000312" key="20">
    <source>
        <dbReference type="Proteomes" id="UP000074855"/>
    </source>
</evidence>
<evidence type="ECO:0007744" key="21">
    <source>
        <dbReference type="PDB" id="6X8P"/>
    </source>
</evidence>
<evidence type="ECO:0007744" key="22">
    <source>
        <dbReference type="PDB" id="6X8Q"/>
    </source>
</evidence>
<evidence type="ECO:0007744" key="23">
    <source>
        <dbReference type="PDB" id="6X8S"/>
    </source>
</evidence>
<evidence type="ECO:0007744" key="24">
    <source>
        <dbReference type="PDB" id="6X8U"/>
    </source>
</evidence>
<gene>
    <name evidence="13" type="primary">CSP</name>
    <name type="ORF">PBANKA_0403200</name>
</gene>
<accession>P23093</accession>
<accession>A0A509AF96</accession>
<keyword id="KW-0002">3D-structure</keyword>
<keyword id="KW-1003">Cell membrane</keyword>
<keyword id="KW-0963">Cytoplasm</keyword>
<keyword id="KW-1015">Disulfide bond</keyword>
<keyword id="KW-0325">Glycoprotein</keyword>
<keyword id="KW-0336">GPI-anchor</keyword>
<keyword id="KW-0449">Lipoprotein</keyword>
<keyword id="KW-0461">Malaria</keyword>
<keyword id="KW-0472">Membrane</keyword>
<keyword id="KW-1185">Reference proteome</keyword>
<keyword id="KW-0677">Repeat</keyword>
<keyword id="KW-0732">Signal</keyword>
<keyword id="KW-0748">Sporozoite</keyword>
<name>CSP_PLABA</name>
<feature type="signal peptide" evidence="4">
    <location>
        <begin position="1"/>
        <end position="23"/>
    </location>
</feature>
<feature type="chain" id="PRO_0000024518" description="Circumsporozoite protein" evidence="4">
    <location>
        <begin position="24"/>
        <end position="317"/>
    </location>
</feature>
<feature type="chain" id="PRO_0000455468" description="Circumsporozoite protein C-terminus" evidence="10">
    <location>
        <begin status="unknown"/>
        <end position="317"/>
    </location>
</feature>
<feature type="propeptide" id="PRO_0000455469" description="Removed in mature form" evidence="4">
    <location>
        <begin position="318"/>
        <end position="340"/>
    </location>
</feature>
<feature type="repeat" description="1-1" evidence="18">
    <location>
        <begin position="94"/>
        <end position="101"/>
    </location>
</feature>
<feature type="repeat" description="1-2" evidence="18">
    <location>
        <begin position="102"/>
        <end position="109"/>
    </location>
</feature>
<feature type="repeat" description="1-3" evidence="18">
    <location>
        <begin position="110"/>
        <end position="117"/>
    </location>
</feature>
<feature type="repeat" description="1-4" evidence="18">
    <location>
        <begin position="118"/>
        <end position="125"/>
    </location>
</feature>
<feature type="repeat" description="1-5" evidence="18">
    <location>
        <begin position="126"/>
        <end position="133"/>
    </location>
</feature>
<feature type="repeat" description="1-6" evidence="18">
    <location>
        <begin position="134"/>
        <end position="141"/>
    </location>
</feature>
<feature type="repeat" description="1-7" evidence="18">
    <location>
        <begin position="142"/>
        <end position="149"/>
    </location>
</feature>
<feature type="repeat" description="1-8" evidence="18">
    <location>
        <begin position="150"/>
        <end position="157"/>
    </location>
</feature>
<feature type="repeat" description="1-9" evidence="18">
    <location>
        <begin position="158"/>
        <end position="165"/>
    </location>
</feature>
<feature type="repeat" description="1-10" evidence="18">
    <location>
        <begin position="166"/>
        <end position="173"/>
    </location>
</feature>
<feature type="repeat" description="1-11" evidence="18">
    <location>
        <begin position="174"/>
        <end position="181"/>
    </location>
</feature>
<feature type="repeat" description="1-12" evidence="18">
    <location>
        <begin position="182"/>
        <end position="189"/>
    </location>
</feature>
<feature type="repeat" description="1-13" evidence="18">
    <location>
        <begin position="190"/>
        <end position="197"/>
    </location>
</feature>
<feature type="repeat" description="1-14; half-length" evidence="18">
    <location>
        <begin position="198"/>
        <end position="201"/>
    </location>
</feature>
<feature type="repeat" description="2-1" evidence="17">
    <location>
        <begin position="207"/>
        <end position="208"/>
    </location>
</feature>
<feature type="repeat" description="2-2" evidence="17">
    <location>
        <begin position="209"/>
        <end position="210"/>
    </location>
</feature>
<feature type="repeat" description="2-3; approximate" evidence="17">
    <location>
        <begin position="211"/>
        <end position="212"/>
    </location>
</feature>
<feature type="repeat" description="2-4" evidence="17">
    <location>
        <begin position="213"/>
        <end position="214"/>
    </location>
</feature>
<feature type="repeat" description="2-5" evidence="17">
    <location>
        <begin position="215"/>
        <end position="216"/>
    </location>
</feature>
<feature type="repeat" description="2-6" evidence="17">
    <location>
        <begin position="217"/>
        <end position="218"/>
    </location>
</feature>
<feature type="repeat" description="2-7" evidence="17">
    <location>
        <begin position="219"/>
        <end position="220"/>
    </location>
</feature>
<feature type="repeat" description="2-8" evidence="17">
    <location>
        <begin position="221"/>
        <end position="222"/>
    </location>
</feature>
<feature type="repeat" description="2-9" evidence="17">
    <location>
        <begin position="223"/>
        <end position="224"/>
    </location>
</feature>
<feature type="repeat" description="2-10" evidence="17">
    <location>
        <begin position="225"/>
        <end position="226"/>
    </location>
</feature>
<feature type="repeat" description="2-11" evidence="17">
    <location>
        <begin position="227"/>
        <end position="228"/>
    </location>
</feature>
<feature type="repeat" description="2-12" evidence="17">
    <location>
        <begin position="229"/>
        <end position="230"/>
    </location>
</feature>
<feature type="repeat" description="2-13; approximate" evidence="17">
    <location>
        <begin position="231"/>
        <end position="232"/>
    </location>
</feature>
<feature type="repeat" description="2-14" evidence="17">
    <location>
        <begin position="233"/>
        <end position="234"/>
    </location>
</feature>
<feature type="repeat" description="2-15" evidence="17">
    <location>
        <begin position="235"/>
        <end position="236"/>
    </location>
</feature>
<feature type="repeat" description="2-16" evidence="17">
    <location>
        <begin position="237"/>
        <end position="238"/>
    </location>
</feature>
<feature type="repeat" description="2-17; approximate" evidence="17">
    <location>
        <begin position="239"/>
        <end position="240"/>
    </location>
</feature>
<feature type="domain" description="TSP type-1" evidence="5">
    <location>
        <begin position="267"/>
        <end position="318"/>
    </location>
</feature>
<feature type="region of interest" description="Disordered" evidence="6">
    <location>
        <begin position="69"/>
        <end position="254"/>
    </location>
</feature>
<feature type="region of interest" description="Required for the binding to heparan sulfate proteoglycans (HSPGs) on the surface of host hepatocytes" evidence="3">
    <location>
        <begin position="79"/>
        <end position="86"/>
    </location>
</feature>
<feature type="region of interest" description="Region I; contains the proteolytic cleavage site" evidence="10">
    <location>
        <begin position="89"/>
        <end position="93"/>
    </location>
</feature>
<feature type="region of interest" description="14 X 8 AA tandem repeats of P-[PA]-P-P-N-[PA]-N-D" evidence="18">
    <location>
        <begin position="94"/>
        <end position="201"/>
    </location>
</feature>
<feature type="region of interest" description="17 X 2 AA approximate tandem repeats of P-Q" evidence="17">
    <location>
        <begin position="207"/>
        <end position="240"/>
    </location>
</feature>
<feature type="compositionally biased region" description="Basic and acidic residues" evidence="6">
    <location>
        <begin position="72"/>
        <end position="88"/>
    </location>
</feature>
<feature type="compositionally biased region" description="Pro residues" evidence="6">
    <location>
        <begin position="92"/>
        <end position="201"/>
    </location>
</feature>
<feature type="compositionally biased region" description="Pro residues" evidence="6">
    <location>
        <begin position="208"/>
        <end position="238"/>
    </location>
</feature>
<feature type="compositionally biased region" description="Low complexity" evidence="6">
    <location>
        <begin position="239"/>
        <end position="252"/>
    </location>
</feature>
<feature type="lipid moiety-binding region" description="GPI-anchor amidated cysteine" evidence="4">
    <location>
        <position position="317"/>
    </location>
</feature>
<feature type="glycosylation site" description="O-linked (Fuc) threonine" evidence="2">
    <location>
        <position position="282"/>
    </location>
</feature>
<feature type="disulfide bond" evidence="3">
    <location>
        <begin position="279"/>
        <end position="312"/>
    </location>
</feature>
<feature type="disulfide bond" evidence="3">
    <location>
        <begin position="283"/>
        <end position="317"/>
    </location>
</feature>
<feature type="mutagenesis site" description="Constitutive exposure of the TSP type-1 (TSR) domain. No defect in cell membrane localization. Sporozoite motility is reduced while its invasive ability is enhanced. In the mosquito vector, produces between 50 and 100% more sporozoites in oocysts due to an increase in budding from sporoblasts. Sporozoite egress from the oocyst is normal; however, they adhere non-specifically throughout the mosquito hemocoel resulting in a reduced number of sporozoites reaching the salivary gland. In the mouse host, enhanced infectivity when sporozoites are injected i.v.; however, no liver infection when sporozoites are injected i.d. due to their failure to exit the host dermis." evidence="10">
    <location>
        <begin position="25"/>
        <end position="93"/>
    </location>
</feature>
<feature type="mutagenesis site" description="Impaired proteolytic processing. Prevents exposure of the TSP type-1 (TSR) domain. No defect in cell membrane localization. In the mosquito vector, oocyst numbers, sporozoite development in oocysts, and sporozoite egress from oocysts are normal. Invasion of salivary glands is reduced by 15%. In the mouse host, sporozoite motility is normal and host cell traversal ability is enhanced in the host dermis. However, invasion of host hepatocytes is reduced by 10-15-fold." evidence="10">
    <location>
        <begin position="89"/>
        <end position="93"/>
    </location>
</feature>
<feature type="mutagenesis site" description="Probable loss of GPI-anchor. The number of oocytes is normal in the mosquito gut following infection; however, sporozoite budding process is defective and no sporozoites are produced. In the oocyst, the inner membrane complex (IMC) forms prematurely before the oocyst plasma membrane is fully retracted. Also, the IMC is not restricted to the sporozoite budding sites, extending underneath the entire oocyst plasma membrane. CSP processing is impaired and remains in the cytoplasm, associated with the periphery of vesicles." evidence="8">
    <location>
        <begin position="317"/>
        <end position="340"/>
    </location>
</feature>
<feature type="sequence conflict" description="In Ref. 1; CAA35608." evidence="15" ref="1">
    <original>N</original>
    <variation>I</variation>
    <location>
        <position position="60"/>
    </location>
</feature>
<feature type="sequence conflict" description="In Ref. 1; CAA35608." evidence="15" ref="1">
    <location>
        <position position="82"/>
    </location>
</feature>
<feature type="sequence conflict" description="In Ref. 1; CAA35608." evidence="15" ref="1">
    <original>P</original>
    <variation>PPPPPNPND</variation>
    <location>
        <position position="93"/>
    </location>
</feature>
<feature type="sequence conflict" description="In Ref. 1; CAA35608." evidence="15" ref="1">
    <original>A</original>
    <variation>P</variation>
    <location>
        <position position="167"/>
    </location>
</feature>
<sequence>MKKCTILVVASLLLVNSLLPGYGQNKSIQAQRNLNELCYNEGNDNKLYHVLNSKNGKIYNRNTVNRLLADAPEGKKNEKKNEKIERNNKLKQPPPPPNPNDPPPPNPNDPPPPNPNDPPPPNPNDPPPPNANDPPPPNANDPAPPNANDPAPPNANDPAPPNANDPAPPNANDPPPPNPNDPAPPNANDPPPPNPNDPAPPQGNNNPQPQPRPQPQPQPQPQPQPQPQPQPRPQPQPQPGGNNNNKNNNNDDSYIPSAEKILEFVKQIRDSITEEWSQCNVTCGSGIRVRKRKGSNKKAEDLTLEDIDTEICKMDKCSSIFNIVSNSLGFVILLVLVFFN</sequence>